<gene>
    <name type="primary">rpoN</name>
    <name type="synonym">ntrA</name>
</gene>
<accession>P24695</accession>
<dbReference type="EMBL" id="M58480">
    <property type="protein sequence ID" value="AAA27379.1"/>
    <property type="molecule type" value="Genomic_DNA"/>
</dbReference>
<dbReference type="PIR" id="B37761">
    <property type="entry name" value="B37761"/>
</dbReference>
<dbReference type="SMR" id="P24695"/>
<dbReference type="GO" id="GO:0000428">
    <property type="term" value="C:DNA-directed RNA polymerase complex"/>
    <property type="evidence" value="ECO:0007669"/>
    <property type="project" value="UniProtKB-KW"/>
</dbReference>
<dbReference type="GO" id="GO:0003677">
    <property type="term" value="F:DNA binding"/>
    <property type="evidence" value="ECO:0007669"/>
    <property type="project" value="UniProtKB-KW"/>
</dbReference>
<dbReference type="GO" id="GO:0001216">
    <property type="term" value="F:DNA-binding transcription activator activity"/>
    <property type="evidence" value="ECO:0007669"/>
    <property type="project" value="InterPro"/>
</dbReference>
<dbReference type="GO" id="GO:0016779">
    <property type="term" value="F:nucleotidyltransferase activity"/>
    <property type="evidence" value="ECO:0007669"/>
    <property type="project" value="UniProtKB-KW"/>
</dbReference>
<dbReference type="GO" id="GO:0016987">
    <property type="term" value="F:sigma factor activity"/>
    <property type="evidence" value="ECO:0007669"/>
    <property type="project" value="UniProtKB-KW"/>
</dbReference>
<dbReference type="GO" id="GO:0006352">
    <property type="term" value="P:DNA-templated transcription initiation"/>
    <property type="evidence" value="ECO:0007669"/>
    <property type="project" value="InterPro"/>
</dbReference>
<dbReference type="GO" id="GO:0009399">
    <property type="term" value="P:nitrogen fixation"/>
    <property type="evidence" value="ECO:0007669"/>
    <property type="project" value="UniProtKB-KW"/>
</dbReference>
<dbReference type="Gene3D" id="1.10.10.60">
    <property type="entry name" value="Homeodomain-like"/>
    <property type="match status" value="1"/>
</dbReference>
<dbReference type="Gene3D" id="1.10.10.1330">
    <property type="entry name" value="RNA polymerase sigma-54 factor, core-binding domain"/>
    <property type="match status" value="1"/>
</dbReference>
<dbReference type="InterPro" id="IPR000394">
    <property type="entry name" value="RNA_pol_sigma_54"/>
</dbReference>
<dbReference type="InterPro" id="IPR007046">
    <property type="entry name" value="RNA_pol_sigma_54_core-bd"/>
</dbReference>
<dbReference type="InterPro" id="IPR007634">
    <property type="entry name" value="RNA_pol_sigma_54_DNA-bd"/>
</dbReference>
<dbReference type="InterPro" id="IPR038709">
    <property type="entry name" value="RpoN_core-bd_sf"/>
</dbReference>
<dbReference type="NCBIfam" id="NF004595">
    <property type="entry name" value="PRK05932.1-2"/>
    <property type="match status" value="1"/>
</dbReference>
<dbReference type="NCBIfam" id="NF009118">
    <property type="entry name" value="PRK12469.1"/>
    <property type="match status" value="1"/>
</dbReference>
<dbReference type="NCBIfam" id="TIGR02395">
    <property type="entry name" value="rpoN_sigma"/>
    <property type="match status" value="1"/>
</dbReference>
<dbReference type="PANTHER" id="PTHR32248">
    <property type="entry name" value="RNA POLYMERASE SIGMA-54 FACTOR"/>
    <property type="match status" value="1"/>
</dbReference>
<dbReference type="PANTHER" id="PTHR32248:SF4">
    <property type="entry name" value="RNA POLYMERASE SIGMA-54 FACTOR"/>
    <property type="match status" value="1"/>
</dbReference>
<dbReference type="Pfam" id="PF00309">
    <property type="entry name" value="Sigma54_AID"/>
    <property type="match status" value="1"/>
</dbReference>
<dbReference type="Pfam" id="PF04963">
    <property type="entry name" value="Sigma54_CBD"/>
    <property type="match status" value="1"/>
</dbReference>
<dbReference type="Pfam" id="PF04552">
    <property type="entry name" value="Sigma54_DBD"/>
    <property type="match status" value="1"/>
</dbReference>
<dbReference type="PIRSF" id="PIRSF000774">
    <property type="entry name" value="RpoN"/>
    <property type="match status" value="1"/>
</dbReference>
<dbReference type="PRINTS" id="PR00045">
    <property type="entry name" value="SIGMA54FCT"/>
</dbReference>
<dbReference type="PROSITE" id="PS00717">
    <property type="entry name" value="SIGMA54_1"/>
    <property type="match status" value="1"/>
</dbReference>
<dbReference type="PROSITE" id="PS00718">
    <property type="entry name" value="SIGMA54_2"/>
    <property type="match status" value="1"/>
</dbReference>
<dbReference type="PROSITE" id="PS50044">
    <property type="entry name" value="SIGMA54_3"/>
    <property type="match status" value="1"/>
</dbReference>
<organism>
    <name type="scientific">Acidithiobacillus ferridurans</name>
    <dbReference type="NCBI Taxonomy" id="1232575"/>
    <lineage>
        <taxon>Bacteria</taxon>
        <taxon>Pseudomonadati</taxon>
        <taxon>Pseudomonadota</taxon>
        <taxon>Acidithiobacillia</taxon>
        <taxon>Acidithiobacillales</taxon>
        <taxon>Acidithiobacillaceae</taxon>
        <taxon>Acidithiobacillus</taxon>
    </lineage>
</organism>
<name>RP54_ACIFI</name>
<protein>
    <recommendedName>
        <fullName>RNA polymerase sigma-54 factor</fullName>
    </recommendedName>
</protein>
<keyword id="KW-0238">DNA-binding</keyword>
<keyword id="KW-0240">DNA-directed RNA polymerase</keyword>
<keyword id="KW-0535">Nitrogen fixation</keyword>
<keyword id="KW-0548">Nucleotidyltransferase</keyword>
<keyword id="KW-0731">Sigma factor</keyword>
<keyword id="KW-0804">Transcription</keyword>
<keyword id="KW-0805">Transcription regulation</keyword>
<keyword id="KW-0808">Transferase</keyword>
<evidence type="ECO:0000255" key="1"/>
<evidence type="ECO:0000256" key="2">
    <source>
        <dbReference type="SAM" id="MobiDB-lite"/>
    </source>
</evidence>
<evidence type="ECO:0000305" key="3"/>
<reference key="1">
    <citation type="journal article" date="1990" name="J. Bacteriol.">
        <title>Complementation of Escherichia coli sigma 54 (NtrA)-dependent formate hydrogenlyase activity by a cloned Thiobacillus ferrooxidans ntrA gene.</title>
        <authorList>
            <person name="Berger D.K."/>
            <person name="Woods D.R."/>
            <person name="Rawlings D.E."/>
        </authorList>
    </citation>
    <scope>NUCLEOTIDE SEQUENCE [GENOMIC DNA]</scope>
    <source>
        <strain>ATCC 33020 / DSM 29468 / JCM 18981 / 11Fe</strain>
    </source>
</reference>
<feature type="chain" id="PRO_0000205544" description="RNA polymerase sigma-54 factor">
    <location>
        <begin position="1"/>
        <end position="475"/>
    </location>
</feature>
<feature type="DNA-binding region" description="H-T-H motif" evidence="1">
    <location>
        <begin position="365"/>
        <end position="384"/>
    </location>
</feature>
<feature type="region of interest" description="Disordered" evidence="2">
    <location>
        <begin position="42"/>
        <end position="64"/>
    </location>
</feature>
<feature type="region of interest" description="Disordered" evidence="2">
    <location>
        <begin position="95"/>
        <end position="115"/>
    </location>
</feature>
<feature type="short sequence motif" description="RPON box">
    <location>
        <begin position="453"/>
        <end position="461"/>
    </location>
</feature>
<proteinExistence type="inferred from homology"/>
<comment type="function">
    <text>Sigma factors are initiation factors that promote the attachment of RNA polymerase to specific initiation sites and are then released. This sigma factor is responsible for the expression of the nitrogen fixation genes. The open complex (sigma-54 and core RNA polymerase) serves as the receptor for receipt of the melting signal from the remotely bound activator protein NifA for the expression of the nitrogen fixation proteins.</text>
</comment>
<comment type="similarity">
    <text evidence="3">Belongs to the sigma-54 factor family.</text>
</comment>
<sequence>MKQGLELKLGQHLAMTPQLQQAIRLLQLSTVDLQQEVQGMLESNPLLDEETGDEGGGGPIPETVELPSEERQLDLAAENILPDELPVDSQWDDIFDMGTSGSGNGSDEDLPDFESRNSRTQSLQDYLRWQADMTHFTADERNMAELIIDAIDERGYLADSLEDLAATMNVQEDALLAVLLRVQDFDPPGVGARNLSECLLLQLKQMVEKDDAHVLLAQRIVKDHLQALGRHDYPRLCTVLGVDEAALRAAMALISALNPKPGEDVGTESTEYVIPDVIVRWAGSRLRTDLNPEAMPKLRINRHYADMAGGKDAAHKYIQDQLNEARWFIKSLQSRQDTILKVARAIVERQKDFFANGPESMRPMVLRHIADAVEMHESTVSRVTNQKYMITPRGLYEFKYFFSSHVGTDSGGSASATAIRALLIKMTQAEDAQHPLSDAEIARVLADQGIQIARRTVAKYREAANVPPASQRRRL</sequence>